<sequence length="301" mass="33829">MGISLSPLLTVLSLLSGRWLELGNGQTVNMVQLPGGRFQMGTDSPDGRDGEGPVREVTVKPFAIDIFPVTNKDFREFVREKKYRTEAEVFGWSFVFEDLVSDELRNKATQRMQSLLWWLPVERAFWRQPAGPGSGIREKLEFPVVHVSWNDARAYCAWRGKRLPTEEEWEFAARGGLKGQVYPWGNKFQPNRTNLWQGKFPKGDKAEDGFHGVSPVNAFPPQNDYGLYDLVGNVWEWTASQYQAADQDMRVLRGASWIDTADGSANHRARVTTRMGNTPDSASDNLGFRCASGAGRPPGEL</sequence>
<protein>
    <recommendedName>
        <fullName evidence="5">Inactive C-alpha-formylglycine-generating enzyme 2</fullName>
    </recommendedName>
    <alternativeName>
        <fullName evidence="1">Sulfatase-modifying factor 2</fullName>
    </alternativeName>
</protein>
<reference key="1">
    <citation type="journal article" date="2005" name="BMC Genomics">
        <title>Characterization of 954 bovine full-CDS cDNA sequences.</title>
        <authorList>
            <person name="Harhay G.P."/>
            <person name="Sonstegard T.S."/>
            <person name="Keele J.W."/>
            <person name="Heaton M.P."/>
            <person name="Clawson M.L."/>
            <person name="Snelling W.M."/>
            <person name="Wiedmann R.T."/>
            <person name="Van Tassell C.P."/>
            <person name="Smith T.P.L."/>
        </authorList>
    </citation>
    <scope>NUCLEOTIDE SEQUENCE [LARGE SCALE MRNA]</scope>
</reference>
<reference key="2">
    <citation type="submission" date="2007-07" db="EMBL/GenBank/DDBJ databases">
        <authorList>
            <consortium name="NIH - Mammalian Gene Collection (MGC) project"/>
        </authorList>
    </citation>
    <scope>NUCLEOTIDE SEQUENCE [LARGE SCALE MRNA]</scope>
    <source>
        <strain>Hereford</strain>
        <tissue>Thymus</tissue>
    </source>
</reference>
<dbReference type="EMBL" id="BT021905">
    <property type="protein sequence ID" value="AAX46752.1"/>
    <property type="molecule type" value="mRNA"/>
</dbReference>
<dbReference type="EMBL" id="BC149259">
    <property type="protein sequence ID" value="AAI49260.1"/>
    <property type="molecule type" value="mRNA"/>
</dbReference>
<dbReference type="RefSeq" id="NP_001014881.1">
    <property type="nucleotide sequence ID" value="NM_001014881.1"/>
</dbReference>
<dbReference type="SMR" id="Q58CP2"/>
<dbReference type="FunCoup" id="Q58CP2">
    <property type="interactions" value="1270"/>
</dbReference>
<dbReference type="STRING" id="9913.ENSBTAP00000065016"/>
<dbReference type="GlyCosmos" id="Q58CP2">
    <property type="glycosylation" value="1 site, No reported glycans"/>
</dbReference>
<dbReference type="GlyGen" id="Q58CP2">
    <property type="glycosylation" value="1 site"/>
</dbReference>
<dbReference type="PaxDb" id="9913-ENSBTAP00000010773"/>
<dbReference type="Ensembl" id="ENSBTAT00000010773.6">
    <property type="protein sequence ID" value="ENSBTAP00000010773.4"/>
    <property type="gene ID" value="ENSBTAG00000008190.6"/>
</dbReference>
<dbReference type="GeneID" id="509497"/>
<dbReference type="KEGG" id="bta:509497"/>
<dbReference type="CTD" id="25870"/>
<dbReference type="VEuPathDB" id="HostDB:ENSBTAG00000008190"/>
<dbReference type="VGNC" id="VGNC:35472">
    <property type="gene designation" value="SUMF2"/>
</dbReference>
<dbReference type="eggNOG" id="ENOG502QRY6">
    <property type="taxonomic scope" value="Eukaryota"/>
</dbReference>
<dbReference type="GeneTree" id="ENSGT00940000162897"/>
<dbReference type="HOGENOM" id="CLU_012431_4_2_1"/>
<dbReference type="InParanoid" id="Q58CP2"/>
<dbReference type="OrthoDB" id="659at2759"/>
<dbReference type="TreeFam" id="TF324027"/>
<dbReference type="Reactome" id="R-BTA-1663150">
    <property type="pathway name" value="The activation of arylsulfatases"/>
</dbReference>
<dbReference type="Reactome" id="R-BTA-9840310">
    <property type="pathway name" value="Glycosphingolipid catabolism"/>
</dbReference>
<dbReference type="Proteomes" id="UP000009136">
    <property type="component" value="Chromosome 25"/>
</dbReference>
<dbReference type="Bgee" id="ENSBTAG00000008190">
    <property type="expression patterns" value="Expressed in prostate gland and 106 other cell types or tissues"/>
</dbReference>
<dbReference type="GO" id="GO:0005783">
    <property type="term" value="C:endoplasmic reticulum"/>
    <property type="evidence" value="ECO:0000250"/>
    <property type="project" value="UniProtKB"/>
</dbReference>
<dbReference type="GO" id="GO:0005788">
    <property type="term" value="C:endoplasmic reticulum lumen"/>
    <property type="evidence" value="ECO:0007669"/>
    <property type="project" value="UniProtKB-SubCell"/>
</dbReference>
<dbReference type="GO" id="GO:0046872">
    <property type="term" value="F:metal ion binding"/>
    <property type="evidence" value="ECO:0007669"/>
    <property type="project" value="UniProtKB-KW"/>
</dbReference>
<dbReference type="FunFam" id="3.90.1580.10:FF:000002">
    <property type="entry name" value="sulfatase-modifying factor 2 isoform X1"/>
    <property type="match status" value="1"/>
</dbReference>
<dbReference type="Gene3D" id="3.90.1580.10">
    <property type="entry name" value="paralog of FGE (formylglycine-generating enzyme)"/>
    <property type="match status" value="1"/>
</dbReference>
<dbReference type="InterPro" id="IPR016187">
    <property type="entry name" value="CTDL_fold"/>
</dbReference>
<dbReference type="InterPro" id="IPR051043">
    <property type="entry name" value="Sulfatase_Mod_Factor_Kinase"/>
</dbReference>
<dbReference type="InterPro" id="IPR005532">
    <property type="entry name" value="SUMF_dom"/>
</dbReference>
<dbReference type="InterPro" id="IPR042095">
    <property type="entry name" value="SUMF_sf"/>
</dbReference>
<dbReference type="PANTHER" id="PTHR23150:SF33">
    <property type="entry name" value="INACTIVE C-ALPHA-FORMYLGLYCINE-GENERATING ENZYME 2"/>
    <property type="match status" value="1"/>
</dbReference>
<dbReference type="PANTHER" id="PTHR23150">
    <property type="entry name" value="SULFATASE MODIFYING FACTOR 1, 2"/>
    <property type="match status" value="1"/>
</dbReference>
<dbReference type="Pfam" id="PF03781">
    <property type="entry name" value="FGE-sulfatase"/>
    <property type="match status" value="1"/>
</dbReference>
<dbReference type="SUPFAM" id="SSF56436">
    <property type="entry name" value="C-type lectin-like"/>
    <property type="match status" value="1"/>
</dbReference>
<comment type="function">
    <text evidence="1">Lacks formylglycine generating activity and is unable to convert newly synthesized inactive sulfatases to their active form. Inhibits the activation of sulfatases by SUMF1.</text>
</comment>
<comment type="subunit">
    <text evidence="1">Homodimer and heterodimer with SUMF1.</text>
</comment>
<comment type="subcellular location">
    <subcellularLocation>
        <location evidence="1">Endoplasmic reticulum lumen</location>
    </subcellularLocation>
</comment>
<comment type="domain">
    <text evidence="1">The non-canonical ER retention motif mediates retention of the protein in the endoplasmic reticulum.</text>
</comment>
<comment type="similarity">
    <text evidence="5">Belongs to the sulfatase-modifying factor family.</text>
</comment>
<comment type="caution">
    <text evidence="5">Although strongly similar to formylglycine-generating enzyme, lacks the catalytic Cys residues that bind the catalytic copper. The catalytic copper is required to activate oxygen and catalyze oxidative C-H activation.</text>
</comment>
<name>SUMF2_BOVIN</name>
<organism>
    <name type="scientific">Bos taurus</name>
    <name type="common">Bovine</name>
    <dbReference type="NCBI Taxonomy" id="9913"/>
    <lineage>
        <taxon>Eukaryota</taxon>
        <taxon>Metazoa</taxon>
        <taxon>Chordata</taxon>
        <taxon>Craniata</taxon>
        <taxon>Vertebrata</taxon>
        <taxon>Euteleostomi</taxon>
        <taxon>Mammalia</taxon>
        <taxon>Eutheria</taxon>
        <taxon>Laurasiatheria</taxon>
        <taxon>Artiodactyla</taxon>
        <taxon>Ruminantia</taxon>
        <taxon>Pecora</taxon>
        <taxon>Bovidae</taxon>
        <taxon>Bovinae</taxon>
        <taxon>Bos</taxon>
    </lineage>
</organism>
<keyword id="KW-0106">Calcium</keyword>
<keyword id="KW-1015">Disulfide bond</keyword>
<keyword id="KW-0256">Endoplasmic reticulum</keyword>
<keyword id="KW-0325">Glycoprotein</keyword>
<keyword id="KW-0479">Metal-binding</keyword>
<keyword id="KW-1185">Reference proteome</keyword>
<keyword id="KW-0732">Signal</keyword>
<accession>Q58CP2</accession>
<accession>A6QPD0</accession>
<gene>
    <name evidence="1" type="primary">SUMF2</name>
</gene>
<feature type="signal peptide" evidence="2">
    <location>
        <begin position="1"/>
        <end position="25"/>
    </location>
</feature>
<feature type="chain" id="PRO_0000033458" description="Inactive C-alpha-formylglycine-generating enzyme 2">
    <location>
        <begin position="26"/>
        <end position="301"/>
    </location>
</feature>
<feature type="region of interest" description="Disordered" evidence="4">
    <location>
        <begin position="274"/>
        <end position="301"/>
    </location>
</feature>
<feature type="short sequence motif" description="Non-canonical ER retention motif" evidence="1">
    <location>
        <begin position="298"/>
        <end position="301"/>
    </location>
</feature>
<feature type="compositionally biased region" description="Polar residues" evidence="4">
    <location>
        <begin position="274"/>
        <end position="284"/>
    </location>
</feature>
<feature type="binding site" evidence="1">
    <location>
        <position position="194"/>
    </location>
    <ligand>
        <name>Ca(2+)</name>
        <dbReference type="ChEBI" id="CHEBI:29108"/>
        <label>1</label>
    </ligand>
</feature>
<feature type="binding site" evidence="1">
    <location>
        <position position="195"/>
    </location>
    <ligand>
        <name>Ca(2+)</name>
        <dbReference type="ChEBI" id="CHEBI:29108"/>
        <label>1</label>
    </ligand>
</feature>
<feature type="binding site" evidence="1">
    <location>
        <position position="208"/>
    </location>
    <ligand>
        <name>Ca(2+)</name>
        <dbReference type="ChEBI" id="CHEBI:29108"/>
        <label>1</label>
    </ligand>
</feature>
<feature type="binding site" evidence="1">
    <location>
        <position position="210"/>
    </location>
    <ligand>
        <name>Ca(2+)</name>
        <dbReference type="ChEBI" id="CHEBI:29108"/>
        <label>1</label>
    </ligand>
</feature>
<feature type="binding site" evidence="1">
    <location>
        <position position="229"/>
    </location>
    <ligand>
        <name>Ca(2+)</name>
        <dbReference type="ChEBI" id="CHEBI:29108"/>
        <label>2</label>
    </ligand>
</feature>
<feature type="binding site" evidence="1">
    <location>
        <position position="232"/>
    </location>
    <ligand>
        <name>Ca(2+)</name>
        <dbReference type="ChEBI" id="CHEBI:29108"/>
        <label>2</label>
    </ligand>
</feature>
<feature type="binding site" evidence="1">
    <location>
        <position position="234"/>
    </location>
    <ligand>
        <name>Ca(2+)</name>
        <dbReference type="ChEBI" id="CHEBI:29108"/>
        <label>2</label>
    </ligand>
</feature>
<feature type="binding site" evidence="1">
    <location>
        <position position="236"/>
    </location>
    <ligand>
        <name>Ca(2+)</name>
        <dbReference type="ChEBI" id="CHEBI:29108"/>
        <label>2</label>
    </ligand>
</feature>
<feature type="glycosylation site" description="N-linked (GlcNAc...) asparagine" evidence="3">
    <location>
        <position position="191"/>
    </location>
</feature>
<feature type="disulfide bond" evidence="1">
    <location>
        <begin position="156"/>
        <end position="290"/>
    </location>
</feature>
<evidence type="ECO:0000250" key="1">
    <source>
        <dbReference type="UniProtKB" id="Q8NBJ7"/>
    </source>
</evidence>
<evidence type="ECO:0000255" key="2"/>
<evidence type="ECO:0000255" key="3">
    <source>
        <dbReference type="PROSITE-ProRule" id="PRU00498"/>
    </source>
</evidence>
<evidence type="ECO:0000256" key="4">
    <source>
        <dbReference type="SAM" id="MobiDB-lite"/>
    </source>
</evidence>
<evidence type="ECO:0000305" key="5"/>
<proteinExistence type="evidence at transcript level"/>